<reference key="1">
    <citation type="journal article" date="2009" name="J. Bacteriol.">
        <title>Complete genome sequence and comparative genome analysis of enteropathogenic Escherichia coli O127:H6 strain E2348/69.</title>
        <authorList>
            <person name="Iguchi A."/>
            <person name="Thomson N.R."/>
            <person name="Ogura Y."/>
            <person name="Saunders D."/>
            <person name="Ooka T."/>
            <person name="Henderson I.R."/>
            <person name="Harris D."/>
            <person name="Asadulghani M."/>
            <person name="Kurokawa K."/>
            <person name="Dean P."/>
            <person name="Kenny B."/>
            <person name="Quail M.A."/>
            <person name="Thurston S."/>
            <person name="Dougan G."/>
            <person name="Hayashi T."/>
            <person name="Parkhill J."/>
            <person name="Frankel G."/>
        </authorList>
    </citation>
    <scope>NUCLEOTIDE SEQUENCE [LARGE SCALE GENOMIC DNA]</scope>
    <source>
        <strain>E2348/69 / EPEC</strain>
    </source>
</reference>
<evidence type="ECO:0000250" key="1"/>
<evidence type="ECO:0000255" key="2">
    <source>
        <dbReference type="HAMAP-Rule" id="MF_00062"/>
    </source>
</evidence>
<gene>
    <name evidence="2" type="primary">cysN</name>
    <name type="ordered locus">E2348C_3021</name>
</gene>
<dbReference type="EC" id="2.7.7.4" evidence="2"/>
<dbReference type="EMBL" id="FM180568">
    <property type="protein sequence ID" value="CAS10569.1"/>
    <property type="molecule type" value="Genomic_DNA"/>
</dbReference>
<dbReference type="RefSeq" id="WP_001090352.1">
    <property type="nucleotide sequence ID" value="NC_011601.1"/>
</dbReference>
<dbReference type="SMR" id="B7UHH0"/>
<dbReference type="KEGG" id="ecg:E2348C_3021"/>
<dbReference type="HOGENOM" id="CLU_007265_5_2_6"/>
<dbReference type="UniPathway" id="UPA00140">
    <property type="reaction ID" value="UER00204"/>
</dbReference>
<dbReference type="Proteomes" id="UP000008205">
    <property type="component" value="Chromosome"/>
</dbReference>
<dbReference type="GO" id="GO:0005524">
    <property type="term" value="F:ATP binding"/>
    <property type="evidence" value="ECO:0007669"/>
    <property type="project" value="UniProtKB-KW"/>
</dbReference>
<dbReference type="GO" id="GO:0005525">
    <property type="term" value="F:GTP binding"/>
    <property type="evidence" value="ECO:0007669"/>
    <property type="project" value="UniProtKB-UniRule"/>
</dbReference>
<dbReference type="GO" id="GO:0003924">
    <property type="term" value="F:GTPase activity"/>
    <property type="evidence" value="ECO:0007669"/>
    <property type="project" value="InterPro"/>
</dbReference>
<dbReference type="GO" id="GO:0004781">
    <property type="term" value="F:sulfate adenylyltransferase (ATP) activity"/>
    <property type="evidence" value="ECO:0007669"/>
    <property type="project" value="UniProtKB-UniRule"/>
</dbReference>
<dbReference type="GO" id="GO:0070814">
    <property type="term" value="P:hydrogen sulfide biosynthetic process"/>
    <property type="evidence" value="ECO:0007669"/>
    <property type="project" value="UniProtKB-UniRule"/>
</dbReference>
<dbReference type="GO" id="GO:0000103">
    <property type="term" value="P:sulfate assimilation"/>
    <property type="evidence" value="ECO:0007669"/>
    <property type="project" value="UniProtKB-UniRule"/>
</dbReference>
<dbReference type="CDD" id="cd04166">
    <property type="entry name" value="CysN_ATPS"/>
    <property type="match status" value="1"/>
</dbReference>
<dbReference type="CDD" id="cd03695">
    <property type="entry name" value="CysN_NodQ_II"/>
    <property type="match status" value="1"/>
</dbReference>
<dbReference type="CDD" id="cd04095">
    <property type="entry name" value="CysN_NoDQ_III"/>
    <property type="match status" value="1"/>
</dbReference>
<dbReference type="FunFam" id="2.40.30.10:FF:000027">
    <property type="entry name" value="Sulfate adenylyltransferase subunit 1"/>
    <property type="match status" value="1"/>
</dbReference>
<dbReference type="FunFam" id="2.40.30.10:FF:000031">
    <property type="entry name" value="Sulfate adenylyltransferase subunit 1"/>
    <property type="match status" value="1"/>
</dbReference>
<dbReference type="FunFam" id="3.40.50.300:FF:000119">
    <property type="entry name" value="Sulfate adenylyltransferase subunit 1"/>
    <property type="match status" value="1"/>
</dbReference>
<dbReference type="Gene3D" id="3.40.50.300">
    <property type="entry name" value="P-loop containing nucleotide triphosphate hydrolases"/>
    <property type="match status" value="1"/>
</dbReference>
<dbReference type="Gene3D" id="2.40.30.10">
    <property type="entry name" value="Translation factors"/>
    <property type="match status" value="2"/>
</dbReference>
<dbReference type="HAMAP" id="MF_00062">
    <property type="entry name" value="Sulf_adenylyltr_sub1"/>
    <property type="match status" value="1"/>
</dbReference>
<dbReference type="InterPro" id="IPR041757">
    <property type="entry name" value="CysN_GTP-bd"/>
</dbReference>
<dbReference type="InterPro" id="IPR044138">
    <property type="entry name" value="CysN_II"/>
</dbReference>
<dbReference type="InterPro" id="IPR044139">
    <property type="entry name" value="CysN_NoDQ_III"/>
</dbReference>
<dbReference type="InterPro" id="IPR031157">
    <property type="entry name" value="G_TR_CS"/>
</dbReference>
<dbReference type="InterPro" id="IPR054696">
    <property type="entry name" value="GTP-eEF1A_C"/>
</dbReference>
<dbReference type="InterPro" id="IPR027417">
    <property type="entry name" value="P-loop_NTPase"/>
</dbReference>
<dbReference type="InterPro" id="IPR005225">
    <property type="entry name" value="Small_GTP-bd"/>
</dbReference>
<dbReference type="InterPro" id="IPR011779">
    <property type="entry name" value="SO4_adenylTrfase_lsu"/>
</dbReference>
<dbReference type="InterPro" id="IPR000795">
    <property type="entry name" value="T_Tr_GTP-bd_dom"/>
</dbReference>
<dbReference type="InterPro" id="IPR050100">
    <property type="entry name" value="TRAFAC_GTPase_members"/>
</dbReference>
<dbReference type="InterPro" id="IPR009000">
    <property type="entry name" value="Transl_B-barrel_sf"/>
</dbReference>
<dbReference type="InterPro" id="IPR009001">
    <property type="entry name" value="Transl_elong_EF1A/Init_IF2_C"/>
</dbReference>
<dbReference type="NCBIfam" id="TIGR02034">
    <property type="entry name" value="CysN"/>
    <property type="match status" value="1"/>
</dbReference>
<dbReference type="NCBIfam" id="NF003478">
    <property type="entry name" value="PRK05124.1"/>
    <property type="match status" value="1"/>
</dbReference>
<dbReference type="NCBIfam" id="TIGR00231">
    <property type="entry name" value="small_GTP"/>
    <property type="match status" value="1"/>
</dbReference>
<dbReference type="PANTHER" id="PTHR23115">
    <property type="entry name" value="TRANSLATION FACTOR"/>
    <property type="match status" value="1"/>
</dbReference>
<dbReference type="Pfam" id="PF22594">
    <property type="entry name" value="GTP-eEF1A_C"/>
    <property type="match status" value="1"/>
</dbReference>
<dbReference type="Pfam" id="PF00009">
    <property type="entry name" value="GTP_EFTU"/>
    <property type="match status" value="1"/>
</dbReference>
<dbReference type="PRINTS" id="PR00315">
    <property type="entry name" value="ELONGATNFCT"/>
</dbReference>
<dbReference type="SUPFAM" id="SSF50465">
    <property type="entry name" value="EF-Tu/eEF-1alpha/eIF2-gamma C-terminal domain"/>
    <property type="match status" value="1"/>
</dbReference>
<dbReference type="SUPFAM" id="SSF52540">
    <property type="entry name" value="P-loop containing nucleoside triphosphate hydrolases"/>
    <property type="match status" value="1"/>
</dbReference>
<dbReference type="SUPFAM" id="SSF50447">
    <property type="entry name" value="Translation proteins"/>
    <property type="match status" value="1"/>
</dbReference>
<dbReference type="PROSITE" id="PS00301">
    <property type="entry name" value="G_TR_1"/>
    <property type="match status" value="1"/>
</dbReference>
<dbReference type="PROSITE" id="PS51722">
    <property type="entry name" value="G_TR_2"/>
    <property type="match status" value="1"/>
</dbReference>
<name>CYSN_ECO27</name>
<proteinExistence type="inferred from homology"/>
<protein>
    <recommendedName>
        <fullName evidence="2">Sulfate adenylyltransferase subunit 1</fullName>
        <ecNumber evidence="2">2.7.7.4</ecNumber>
    </recommendedName>
    <alternativeName>
        <fullName evidence="2">ATP-sulfurylase large subunit</fullName>
    </alternativeName>
    <alternativeName>
        <fullName evidence="2">Sulfate adenylate transferase</fullName>
        <shortName evidence="2">SAT</shortName>
    </alternativeName>
</protein>
<feature type="chain" id="PRO_1000117912" description="Sulfate adenylyltransferase subunit 1">
    <location>
        <begin position="1"/>
        <end position="475"/>
    </location>
</feature>
<feature type="domain" description="tr-type G">
    <location>
        <begin position="25"/>
        <end position="239"/>
    </location>
</feature>
<feature type="region of interest" description="G1" evidence="1">
    <location>
        <begin position="34"/>
        <end position="41"/>
    </location>
</feature>
<feature type="region of interest" description="G2" evidence="1">
    <location>
        <begin position="92"/>
        <end position="96"/>
    </location>
</feature>
<feature type="region of interest" description="G3" evidence="1">
    <location>
        <begin position="113"/>
        <end position="116"/>
    </location>
</feature>
<feature type="region of interest" description="G4" evidence="1">
    <location>
        <begin position="168"/>
        <end position="171"/>
    </location>
</feature>
<feature type="region of interest" description="G5" evidence="1">
    <location>
        <begin position="206"/>
        <end position="208"/>
    </location>
</feature>
<feature type="binding site" evidence="2">
    <location>
        <begin position="34"/>
        <end position="41"/>
    </location>
    <ligand>
        <name>GTP</name>
        <dbReference type="ChEBI" id="CHEBI:37565"/>
    </ligand>
</feature>
<feature type="binding site" evidence="2">
    <location>
        <begin position="113"/>
        <end position="117"/>
    </location>
    <ligand>
        <name>GTP</name>
        <dbReference type="ChEBI" id="CHEBI:37565"/>
    </ligand>
</feature>
<feature type="binding site" evidence="2">
    <location>
        <begin position="168"/>
        <end position="171"/>
    </location>
    <ligand>
        <name>GTP</name>
        <dbReference type="ChEBI" id="CHEBI:37565"/>
    </ligand>
</feature>
<organism>
    <name type="scientific">Escherichia coli O127:H6 (strain E2348/69 / EPEC)</name>
    <dbReference type="NCBI Taxonomy" id="574521"/>
    <lineage>
        <taxon>Bacteria</taxon>
        <taxon>Pseudomonadati</taxon>
        <taxon>Pseudomonadota</taxon>
        <taxon>Gammaproteobacteria</taxon>
        <taxon>Enterobacterales</taxon>
        <taxon>Enterobacteriaceae</taxon>
        <taxon>Escherichia</taxon>
    </lineage>
</organism>
<sequence>MNTALAQQIANEGGVEAWMIAQQHKSLLRFLTCGSVDDGKSTLIGRLLHDTRQIYEDQLSSLHNDSKRHGTQGEKLDLALLVDGLQAEREQGITIDVAYRYFSTEKRKFIIADTPGHEQYTRNMATGASTCELAILLIDARKGVLDQTRRHSFISTLLGIKHLVVAINKMDLVDYSEETFTRIREDYLTFAGLLPGNLDIRFVPLSALEGDNVASQSESMPWYSGPTLLEVLETVEIQRVVDAQPMRFPVQYVNRPNLDFRGYAGTLASGRVEVGQRVKVLPSGVESNVARIVTFDGDREEAFAGEAITLVLTDEIDISRGDLLLAADETLPAVQSASVDVVWMAEQPLSPGQSYDIKIAGKKTRARVDGIRYQVDINNLTQREVENLPLNGIGLVDLTFDEPLVLDRYQQNPVTGGLILIDRLSNVTVGAGMVHEPVSQATAAPSQFSVFELELNALVRRHFPHWGARDLLGDK</sequence>
<comment type="function">
    <text evidence="2">With CysD forms the ATP sulfurylase (ATPS) that catalyzes the adenylation of sulfate producing adenosine 5'-phosphosulfate (APS) and diphosphate, the first enzymatic step in sulfur assimilation pathway. APS synthesis involves the formation of a high-energy phosphoric-sulfuric acid anhydride bond driven by GTP hydrolysis by CysN coupled to ATP hydrolysis by CysD.</text>
</comment>
<comment type="catalytic activity">
    <reaction evidence="2">
        <text>sulfate + ATP + H(+) = adenosine 5'-phosphosulfate + diphosphate</text>
        <dbReference type="Rhea" id="RHEA:18133"/>
        <dbReference type="ChEBI" id="CHEBI:15378"/>
        <dbReference type="ChEBI" id="CHEBI:16189"/>
        <dbReference type="ChEBI" id="CHEBI:30616"/>
        <dbReference type="ChEBI" id="CHEBI:33019"/>
        <dbReference type="ChEBI" id="CHEBI:58243"/>
        <dbReference type="EC" id="2.7.7.4"/>
    </reaction>
</comment>
<comment type="pathway">
    <text evidence="2">Sulfur metabolism; hydrogen sulfide biosynthesis; sulfite from sulfate: step 1/3.</text>
</comment>
<comment type="subunit">
    <text evidence="2">Heterodimer composed of CysD, the smaller subunit, and CysN.</text>
</comment>
<comment type="similarity">
    <text evidence="2">Belongs to the TRAFAC class translation factor GTPase superfamily. Classic translation factor GTPase family. CysN/NodQ subfamily.</text>
</comment>
<keyword id="KW-0067">ATP-binding</keyword>
<keyword id="KW-0342">GTP-binding</keyword>
<keyword id="KW-0547">Nucleotide-binding</keyword>
<keyword id="KW-0548">Nucleotidyltransferase</keyword>
<keyword id="KW-1185">Reference proteome</keyword>
<keyword id="KW-0808">Transferase</keyword>
<accession>B7UHH0</accession>